<organism>
    <name type="scientific">Bacillus thuringiensis subsp. aizawai</name>
    <dbReference type="NCBI Taxonomy" id="1433"/>
    <lineage>
        <taxon>Bacteria</taxon>
        <taxon>Bacillati</taxon>
        <taxon>Bacillota</taxon>
        <taxon>Bacilli</taxon>
        <taxon>Bacillales</taxon>
        <taxon>Bacillaceae</taxon>
        <taxon>Bacillus</taxon>
        <taxon>Bacillus cereus group</taxon>
    </lineage>
</organism>
<proteinExistence type="evidence at protein level"/>
<evidence type="ECO:0000305" key="1"/>
<evidence type="ECO:0007829" key="2">
    <source>
        <dbReference type="PDB" id="6DJ4"/>
    </source>
</evidence>
<name>CR1AB_BACTA</name>
<accession>P0A372</accession>
<accession>P06577</accession>
<accession>P06578</accession>
<accession>P09663</accession>
<accession>P09666</accession>
<accession>P09667</accession>
<accession>P21257</accession>
<accession>Q45789</accession>
<sequence length="1155" mass="130624">MDNNPNINECIPYNCLSNPEVEVLGGERIETGYTPIDISLSLTQFLLSEFVPGAGFVLGLVDIIWGIFGPSQWDAFLVQIEQLINQRIEEFARNQAISRLEGLSNLYQIYAESFREWEADPTNPALREEMRIQFNDMNSALTTAIPLFAVQNYQVPLLSVYVQAANLHLSVLRDVSVFGQRWGFDAATINSRYNDLTRLIGNYTDHAVRWYNTGLERVWGPDSRDWIRYNQFRRELTLTVLDIVSLFPNYDSRTYPIRTVSQLTREIYTNPVLENFDGSFRGSAQGIEGSIRSPHLMDILNSITIYTDAHRGEYYWSGHQIMASPVGFSGPEFTFPLYGTMGNAAPQQRIVAQLGQGVYRTLSSTLYRRPFNIGINNQQLSVLDGTEFAYGTSSNLPSAVYRKSGTVDSLDEIPPQNNNVPPRQGFSHRLSHVSMFRSGFSNSSVSIIRAPMFSWIHRSAEFNNIIPSSQITQIPLTKSTNLGSGTSVVKGPGFTGGDILRRTSPGQISTLRVNITAPLSQRYRVRIRYASTTNLQFHTSIDGRPINQGNFSATMSSGSNLQSGSFRTVGFTTPFNFSNGSSVFTLSAHVFNSGNEVYIDRIEFVPAEVTFEAEYDLERAQKAVNELFTSSNQIGLKTDVTDYHIDQVSNLVECLSDEFCLDEKKELSEKVKHAKRLSDERNLLQDPNFRGINRQLDRGWRGSTDITIQGGDDVFKENYVTLLGTFDECYPTYLYQKIDESKLKAYTRYQLRGYIEDSQDLEIYLIRYNAKHETVNVPGTGSLWPLSAPSPIGKCAHHSHHFSLDIDVGCTDLNEDLGVWVIFKIKTQDGHARLGNLEFLEEKPLVGEALARVKRAEKKWRDKREKLEWETNIVYKEAKESVDALFVNSQYDRLQADTNIAMIHAADKRVHSIREAYLPELSVIPGVNAAIFEELEGRIFTAFSLYDARNVIKNGDFNNGLSCWNVKGHVDVEEQNNHRSVLVVPEWEAEVSQEVRVCPGRGYILRVTAYKEGYGEGCVTIHEIENNTDELKFSNCVEEEVYPNNTVTCNDYTATQEEYEGTYTSRNRGYDGAYESNSSVPADYASAYEEKAYTDGRRDNPCESNRGYGDYTPLPAGYVTKELEYFPETDKVWIEIGETEGTFIVDSVELLLMEE</sequence>
<keyword id="KW-0002">3D-structure</keyword>
<keyword id="KW-0749">Sporulation</keyword>
<keyword id="KW-0800">Toxin</keyword>
<keyword id="KW-0843">Virulence</keyword>
<protein>
    <recommendedName>
        <fullName>Pesticidal crystal protein Cry1Ab</fullName>
    </recommendedName>
    <alternativeName>
        <fullName>130 kDa crystal protein</fullName>
    </alternativeName>
    <alternativeName>
        <fullName>Crystaline entomocidal protoxin</fullName>
    </alternativeName>
    <alternativeName>
        <fullName>Insecticidal delta-endotoxin CryIA(b)</fullName>
    </alternativeName>
</protein>
<reference key="1">
    <citation type="journal article" date="1987" name="Gene">
        <title>Nucleotide sequence of the insecticidal protein gene of Bacillus thuringiensis strain aizawai IPL7 and its high-level expression in Escherichia coli.</title>
        <authorList>
            <person name="Oeda K."/>
            <person name="Oshie K."/>
            <person name="Shimizu M."/>
            <person name="Nakamura K."/>
            <person name="Yamamoto H."/>
            <person name="Nakayama I."/>
            <person name="Ohkawa H."/>
        </authorList>
    </citation>
    <scope>NUCLEOTIDE SEQUENCE [GENOMIC DNA]</scope>
    <source>
        <strain>IPL7</strain>
    </source>
</reference>
<reference key="2">
    <citation type="journal article" date="1988" name="Nucleic Acids Res.">
        <title>Nucleotide sequence of a Bacillus thuringiensis aizawai IC1 entomocidal crystal protein gene.</title>
        <authorList>
            <person name="Haider M.Z."/>
            <person name="Ellar D.J."/>
        </authorList>
    </citation>
    <scope>NUCLEOTIDE SEQUENCE [GENOMIC DNA]</scope>
    <source>
        <strain>IC1</strain>
    </source>
</reference>
<reference key="3">
    <citation type="journal article" date="1993" name="Proc. Natl. Sci. Counc. Repub. China, B, Life Sci.">
        <title>Complete nucleotide sequence and identification of a putative promoter region for the expression in Escherichia coli of the cryIA(b) gene from Bacillus thuringiensis var. aizawai HD133.</title>
        <authorList>
            <person name="Chak K.-F."/>
            <person name="Jen J.C."/>
        </authorList>
    </citation>
    <scope>NUCLEOTIDE SEQUENCE [GENOMIC DNA]</scope>
    <source>
        <strain>HD-133</strain>
    </source>
</reference>
<reference key="4">
    <citation type="journal article" date="1989" name="J. Mol. Biol.">
        <title>Functional mapping of an entomocidal delta-endotoxin. Single amino acid changes produced by site-directed mutagenesis influence toxicity and specificity of the protein.</title>
        <authorList>
            <person name="Haider M.Z."/>
            <person name="Ellar D.J."/>
        </authorList>
    </citation>
    <scope>NUCLEOTIDE SEQUENCE [GENOMIC DNA] OF 429-725</scope>
    <source>
        <strain>IC1</strain>
    </source>
</reference>
<dbReference type="EMBL" id="M16463">
    <property type="protein sequence ID" value="AAA22551.1"/>
    <property type="molecule type" value="Genomic_DNA"/>
</dbReference>
<dbReference type="EMBL" id="X13233">
    <property type="protein sequence ID" value="CAA31620.1"/>
    <property type="molecule type" value="Genomic_DNA"/>
</dbReference>
<dbReference type="EMBL" id="X54939">
    <property type="protein sequence ID" value="CAA38701.1"/>
    <property type="molecule type" value="Genomic_DNA"/>
</dbReference>
<dbReference type="EMBL" id="X16315">
    <property type="protein sequence ID" value="CAA34382.1"/>
    <property type="molecule type" value="Genomic_DNA"/>
</dbReference>
<dbReference type="PIR" id="A26513">
    <property type="entry name" value="A26513"/>
</dbReference>
<dbReference type="PIR" id="S02134">
    <property type="entry name" value="S02134"/>
</dbReference>
<dbReference type="PDB" id="6DJ4">
    <property type="method" value="X-ray"/>
    <property type="resolution" value="3.01 A"/>
    <property type="chains" value="A=29-476"/>
</dbReference>
<dbReference type="PDBsum" id="6DJ4"/>
<dbReference type="SMR" id="P0A372"/>
<dbReference type="GO" id="GO:0005102">
    <property type="term" value="F:signaling receptor binding"/>
    <property type="evidence" value="ECO:0007669"/>
    <property type="project" value="InterPro"/>
</dbReference>
<dbReference type="GO" id="GO:0090729">
    <property type="term" value="F:toxin activity"/>
    <property type="evidence" value="ECO:0007669"/>
    <property type="project" value="UniProtKB-KW"/>
</dbReference>
<dbReference type="GO" id="GO:0030435">
    <property type="term" value="P:sporulation resulting in formation of a cellular spore"/>
    <property type="evidence" value="ECO:0007669"/>
    <property type="project" value="UniProtKB-KW"/>
</dbReference>
<dbReference type="GO" id="GO:0001907">
    <property type="term" value="P:symbiont-mediated killing of host cell"/>
    <property type="evidence" value="ECO:0007669"/>
    <property type="project" value="InterPro"/>
</dbReference>
<dbReference type="CDD" id="cd04085">
    <property type="entry name" value="delta_endotoxin_C"/>
    <property type="match status" value="1"/>
</dbReference>
<dbReference type="Gene3D" id="2.60.120.260">
    <property type="entry name" value="Galactose-binding domain-like"/>
    <property type="match status" value="2"/>
</dbReference>
<dbReference type="Gene3D" id="2.100.10.10">
    <property type="entry name" value="Pesticidal crystal protein, central domain"/>
    <property type="match status" value="1"/>
</dbReference>
<dbReference type="Gene3D" id="1.20.190.10">
    <property type="entry name" value="Pesticidal crystal protein, N-terminal domain"/>
    <property type="match status" value="1"/>
</dbReference>
<dbReference type="InterPro" id="IPR048645">
    <property type="entry name" value="Cry1Ac-like_dom-VII"/>
</dbReference>
<dbReference type="InterPro" id="IPR041587">
    <property type="entry name" value="Cry_V"/>
</dbReference>
<dbReference type="InterPro" id="IPR008979">
    <property type="entry name" value="Galactose-bd-like_sf"/>
</dbReference>
<dbReference type="InterPro" id="IPR038979">
    <property type="entry name" value="Pest_crys"/>
</dbReference>
<dbReference type="InterPro" id="IPR054544">
    <property type="entry name" value="Pest_crys_Cry1Aa_dom-IV"/>
</dbReference>
<dbReference type="InterPro" id="IPR005638">
    <property type="entry name" value="Pest_crys_dom-III"/>
</dbReference>
<dbReference type="InterPro" id="IPR005639">
    <property type="entry name" value="Pest_crys_dom_I"/>
</dbReference>
<dbReference type="InterPro" id="IPR036716">
    <property type="entry name" value="Pest_crys_N_sf"/>
</dbReference>
<dbReference type="InterPro" id="IPR036399">
    <property type="entry name" value="Pest_cryst_cen_dom_sf"/>
</dbReference>
<dbReference type="InterPro" id="IPR001178">
    <property type="entry name" value="Pest_cryst_dom_II"/>
</dbReference>
<dbReference type="PANTHER" id="PTHR37003">
    <property type="entry name" value="ENDOTOXIN_N DOMAIN-CONTAINING PROTEIN-RELATED"/>
    <property type="match status" value="1"/>
</dbReference>
<dbReference type="PANTHER" id="PTHR37003:SF2">
    <property type="entry name" value="PESTICIDAL CRYSTAL PROTEIN N-TERMINAL DOMAIN-CONTAINING PROTEIN"/>
    <property type="match status" value="1"/>
</dbReference>
<dbReference type="Pfam" id="PF17997">
    <property type="entry name" value="Cry1Ac_D5"/>
    <property type="match status" value="1"/>
</dbReference>
<dbReference type="Pfam" id="PF21463">
    <property type="entry name" value="Cry1Ac_dom-VII"/>
    <property type="match status" value="1"/>
</dbReference>
<dbReference type="Pfam" id="PF03944">
    <property type="entry name" value="Endotoxin_C"/>
    <property type="match status" value="1"/>
</dbReference>
<dbReference type="Pfam" id="PF18449">
    <property type="entry name" value="Endotoxin_C2"/>
    <property type="match status" value="1"/>
</dbReference>
<dbReference type="Pfam" id="PF00555">
    <property type="entry name" value="Endotoxin_M"/>
    <property type="match status" value="1"/>
</dbReference>
<dbReference type="Pfam" id="PF03945">
    <property type="entry name" value="Endotoxin_N"/>
    <property type="match status" value="1"/>
</dbReference>
<dbReference type="SUPFAM" id="SSF51096">
    <property type="entry name" value="delta-Endotoxin (insectocide), middle domain"/>
    <property type="match status" value="1"/>
</dbReference>
<dbReference type="SUPFAM" id="SSF56849">
    <property type="entry name" value="delta-Endotoxin (insectocide), N-terminal domain"/>
    <property type="match status" value="1"/>
</dbReference>
<dbReference type="SUPFAM" id="SSF49785">
    <property type="entry name" value="Galactose-binding domain-like"/>
    <property type="match status" value="1"/>
</dbReference>
<gene>
    <name type="primary">cry1Ab</name>
    <name type="synonym">bt2</name>
    <name type="synonym">cry-1-2</name>
    <name type="synonym">cry1A(b)</name>
    <name type="synonym">cryIA(b)</name>
    <name type="synonym">cryIC1</name>
</gene>
<feature type="chain" id="PRO_0000174021" description="Pesticidal crystal protein Cry1Ab">
    <location>
        <begin position="1"/>
        <end position="1155"/>
    </location>
</feature>
<feature type="sequence conflict" description="In Ref. 1; AAA22551." evidence="1" ref="1">
    <original>GS</original>
    <variation>AL</variation>
    <location>
        <begin position="282"/>
        <end position="283"/>
    </location>
</feature>
<feature type="sequence conflict" description="In Ref. 2; CAA31620." evidence="1" ref="2">
    <original>A</original>
    <variation>P</variation>
    <location>
        <position position="450"/>
    </location>
</feature>
<feature type="sequence conflict" description="In Ref. 2 and 4." evidence="1" ref="2 4">
    <original>F</original>
    <variation>L</variation>
    <location>
        <position position="537"/>
    </location>
</feature>
<feature type="sequence conflict" description="In Ref. 2 and 4." evidence="1" ref="2 4">
    <original>P</original>
    <variation>I</variation>
    <location>
        <position position="545"/>
    </location>
</feature>
<feature type="sequence conflict" description="In Ref. 2 and 4." evidence="1" ref="2 4">
    <original>T</original>
    <variation>I</variation>
    <location>
        <position position="568"/>
    </location>
</feature>
<feature type="sequence conflict" description="In Ref. 2; CAA31620." evidence="1" ref="2">
    <original>P</original>
    <variation>L</variation>
    <location>
        <position position="731"/>
    </location>
</feature>
<feature type="sequence conflict" description="In Ref. 2; CAA31620." evidence="1" ref="2">
    <original>P</original>
    <variation>R</variation>
    <location>
        <position position="785"/>
    </location>
</feature>
<feature type="sequence conflict" description="In Ref. 1; AAA22551." evidence="1" ref="1">
    <original>H</original>
    <variation>Q</variation>
    <location>
        <position position="978"/>
    </location>
</feature>
<feature type="sequence conflict" description="In Ref. 1; AAA22551." evidence="1" ref="1">
    <original>C</original>
    <variation>F</variation>
    <location>
        <position position="1036"/>
    </location>
</feature>
<feature type="helix" evidence="2">
    <location>
        <begin position="35"/>
        <end position="47"/>
    </location>
</feature>
<feature type="helix" evidence="2">
    <location>
        <begin position="54"/>
        <end position="63"/>
    </location>
</feature>
<feature type="turn" evidence="2">
    <location>
        <begin position="64"/>
        <end position="66"/>
    </location>
</feature>
<feature type="helix" evidence="2">
    <location>
        <begin position="71"/>
        <end position="84"/>
    </location>
</feature>
<feature type="helix" evidence="2">
    <location>
        <begin position="90"/>
        <end position="119"/>
    </location>
</feature>
<feature type="helix" evidence="2">
    <location>
        <begin position="124"/>
        <end position="144"/>
    </location>
</feature>
<feature type="helix" evidence="2">
    <location>
        <begin position="145"/>
        <end position="148"/>
    </location>
</feature>
<feature type="turn" evidence="2">
    <location>
        <begin position="154"/>
        <end position="157"/>
    </location>
</feature>
<feature type="helix" evidence="2">
    <location>
        <begin position="158"/>
        <end position="182"/>
    </location>
</feature>
<feature type="helix" evidence="2">
    <location>
        <begin position="186"/>
        <end position="218"/>
    </location>
</feature>
<feature type="helix" evidence="2">
    <location>
        <begin position="223"/>
        <end position="239"/>
    </location>
</feature>
<feature type="helix" evidence="2">
    <location>
        <begin position="241"/>
        <end position="244"/>
    </location>
</feature>
<feature type="helix" evidence="2">
    <location>
        <begin position="245"/>
        <end position="250"/>
    </location>
</feature>
<feature type="turn" evidence="2">
    <location>
        <begin position="252"/>
        <end position="254"/>
    </location>
</feature>
<feature type="strand" evidence="2">
    <location>
        <begin position="266"/>
        <end position="269"/>
    </location>
</feature>
<feature type="helix" evidence="2">
    <location>
        <begin position="271"/>
        <end position="275"/>
    </location>
</feature>
<feature type="helix" evidence="2">
    <location>
        <begin position="284"/>
        <end position="289"/>
    </location>
</feature>
<feature type="strand" evidence="2">
    <location>
        <begin position="298"/>
        <end position="312"/>
    </location>
</feature>
<feature type="strand" evidence="2">
    <location>
        <begin position="314"/>
        <end position="326"/>
    </location>
</feature>
<feature type="strand" evidence="2">
    <location>
        <begin position="343"/>
        <end position="345"/>
    </location>
</feature>
<feature type="strand" evidence="2">
    <location>
        <begin position="358"/>
        <end position="368"/>
    </location>
</feature>
<feature type="strand" evidence="2">
    <location>
        <begin position="379"/>
        <end position="390"/>
    </location>
</feature>
<feature type="strand" evidence="2">
    <location>
        <begin position="399"/>
        <end position="403"/>
    </location>
</feature>
<feature type="strand" evidence="2">
    <location>
        <begin position="406"/>
        <end position="408"/>
    </location>
</feature>
<feature type="helix" evidence="2">
    <location>
        <begin position="409"/>
        <end position="411"/>
    </location>
</feature>
<feature type="turn" evidence="2">
    <location>
        <begin position="422"/>
        <end position="424"/>
    </location>
</feature>
<feature type="strand" evidence="2">
    <location>
        <begin position="427"/>
        <end position="438"/>
    </location>
</feature>
<feature type="turn" evidence="2">
    <location>
        <begin position="441"/>
        <end position="443"/>
    </location>
</feature>
<feature type="strand" evidence="2">
    <location>
        <begin position="445"/>
        <end position="457"/>
    </location>
</feature>
<feature type="strand" evidence="2">
    <location>
        <begin position="468"/>
        <end position="475"/>
    </location>
</feature>
<comment type="function">
    <text>Promotes colloidosmotic lysis by binding to the midgut epithelial cells of many lepidopteran larvae.</text>
</comment>
<comment type="developmental stage">
    <text>The crystal protein is produced during sporulation and is accumulated both as an inclusion and as part of the spore coat.</text>
</comment>
<comment type="miscellaneous">
    <text>Toxic segment of the protein is located in the N-terminus.</text>
</comment>
<comment type="similarity">
    <text evidence="1">Belongs to the delta endotoxin family.</text>
</comment>